<organism>
    <name type="scientific">Anaplasma marginale (strain Florida)</name>
    <dbReference type="NCBI Taxonomy" id="320483"/>
    <lineage>
        <taxon>Bacteria</taxon>
        <taxon>Pseudomonadati</taxon>
        <taxon>Pseudomonadota</taxon>
        <taxon>Alphaproteobacteria</taxon>
        <taxon>Rickettsiales</taxon>
        <taxon>Anaplasmataceae</taxon>
        <taxon>Anaplasma</taxon>
    </lineage>
</organism>
<comment type="function">
    <text evidence="1">Single strand-specific metallo-endoribonuclease involved in late-stage 70S ribosome quality control and in maturation of the 3' terminus of the 16S rRNA.</text>
</comment>
<comment type="cofactor">
    <cofactor evidence="1">
        <name>Zn(2+)</name>
        <dbReference type="ChEBI" id="CHEBI:29105"/>
    </cofactor>
    <text evidence="1">Binds 1 zinc ion.</text>
</comment>
<comment type="subcellular location">
    <subcellularLocation>
        <location evidence="1">Cytoplasm</location>
    </subcellularLocation>
</comment>
<comment type="similarity">
    <text evidence="1">Belongs to the endoribonuclease YbeY family.</text>
</comment>
<keyword id="KW-0963">Cytoplasm</keyword>
<keyword id="KW-0255">Endonuclease</keyword>
<keyword id="KW-0378">Hydrolase</keyword>
<keyword id="KW-0479">Metal-binding</keyword>
<keyword id="KW-0540">Nuclease</keyword>
<keyword id="KW-1185">Reference proteome</keyword>
<keyword id="KW-0690">Ribosome biogenesis</keyword>
<keyword id="KW-0698">rRNA processing</keyword>
<keyword id="KW-0862">Zinc</keyword>
<accession>B9KH69</accession>
<proteinExistence type="inferred from homology"/>
<sequence>MIEVNIHTRGWYKLVGKPKTSAKRVIRFCLSELDITKYDPKVFVVLANDALLLELNSQYRGIHKATNVLSFSYEKLSPGCCLGEIYLSMERIAEESLEMDVAVRSHFFHMLIHGMLHILGYDHEEPEEAITMQALEVGLLAKLGIRNPYVPRET</sequence>
<name>YBEY_ANAMF</name>
<protein>
    <recommendedName>
        <fullName evidence="1">Endoribonuclease YbeY</fullName>
        <ecNumber evidence="1">3.1.-.-</ecNumber>
    </recommendedName>
</protein>
<dbReference type="EC" id="3.1.-.-" evidence="1"/>
<dbReference type="EMBL" id="CP001079">
    <property type="protein sequence ID" value="ACM49773.1"/>
    <property type="molecule type" value="Genomic_DNA"/>
</dbReference>
<dbReference type="RefSeq" id="WP_010268936.1">
    <property type="nucleotide sequence ID" value="NZ_AFMS01000151.1"/>
</dbReference>
<dbReference type="SMR" id="B9KH69"/>
<dbReference type="STRING" id="320483.AMF_953"/>
<dbReference type="GeneID" id="7398542"/>
<dbReference type="KEGG" id="amf:AMF_953"/>
<dbReference type="eggNOG" id="COG0319">
    <property type="taxonomic scope" value="Bacteria"/>
</dbReference>
<dbReference type="HOGENOM" id="CLU_106710_0_0_5"/>
<dbReference type="Proteomes" id="UP000007307">
    <property type="component" value="Chromosome"/>
</dbReference>
<dbReference type="GO" id="GO:0005737">
    <property type="term" value="C:cytoplasm"/>
    <property type="evidence" value="ECO:0007669"/>
    <property type="project" value="UniProtKB-SubCell"/>
</dbReference>
<dbReference type="GO" id="GO:0004222">
    <property type="term" value="F:metalloendopeptidase activity"/>
    <property type="evidence" value="ECO:0007669"/>
    <property type="project" value="InterPro"/>
</dbReference>
<dbReference type="GO" id="GO:0004521">
    <property type="term" value="F:RNA endonuclease activity"/>
    <property type="evidence" value="ECO:0007669"/>
    <property type="project" value="UniProtKB-UniRule"/>
</dbReference>
<dbReference type="GO" id="GO:0008270">
    <property type="term" value="F:zinc ion binding"/>
    <property type="evidence" value="ECO:0007669"/>
    <property type="project" value="UniProtKB-UniRule"/>
</dbReference>
<dbReference type="GO" id="GO:0006364">
    <property type="term" value="P:rRNA processing"/>
    <property type="evidence" value="ECO:0007669"/>
    <property type="project" value="UniProtKB-UniRule"/>
</dbReference>
<dbReference type="Gene3D" id="3.40.390.30">
    <property type="entry name" value="Metalloproteases ('zincins'), catalytic domain"/>
    <property type="match status" value="1"/>
</dbReference>
<dbReference type="HAMAP" id="MF_00009">
    <property type="entry name" value="Endoribonucl_YbeY"/>
    <property type="match status" value="1"/>
</dbReference>
<dbReference type="InterPro" id="IPR023091">
    <property type="entry name" value="MetalPrtase_cat_dom_sf_prd"/>
</dbReference>
<dbReference type="InterPro" id="IPR002036">
    <property type="entry name" value="YbeY"/>
</dbReference>
<dbReference type="InterPro" id="IPR020549">
    <property type="entry name" value="YbeY_CS"/>
</dbReference>
<dbReference type="NCBIfam" id="TIGR00043">
    <property type="entry name" value="rRNA maturation RNase YbeY"/>
    <property type="match status" value="1"/>
</dbReference>
<dbReference type="PANTHER" id="PTHR46986">
    <property type="entry name" value="ENDORIBONUCLEASE YBEY, CHLOROPLASTIC"/>
    <property type="match status" value="1"/>
</dbReference>
<dbReference type="PANTHER" id="PTHR46986:SF1">
    <property type="entry name" value="ENDORIBONUCLEASE YBEY, CHLOROPLASTIC"/>
    <property type="match status" value="1"/>
</dbReference>
<dbReference type="Pfam" id="PF02130">
    <property type="entry name" value="YbeY"/>
    <property type="match status" value="1"/>
</dbReference>
<dbReference type="SUPFAM" id="SSF55486">
    <property type="entry name" value="Metalloproteases ('zincins'), catalytic domain"/>
    <property type="match status" value="1"/>
</dbReference>
<dbReference type="PROSITE" id="PS01306">
    <property type="entry name" value="UPF0054"/>
    <property type="match status" value="1"/>
</dbReference>
<feature type="chain" id="PRO_1000199944" description="Endoribonuclease YbeY">
    <location>
        <begin position="1"/>
        <end position="154"/>
    </location>
</feature>
<feature type="binding site" evidence="1">
    <location>
        <position position="113"/>
    </location>
    <ligand>
        <name>Zn(2+)</name>
        <dbReference type="ChEBI" id="CHEBI:29105"/>
        <note>catalytic</note>
    </ligand>
</feature>
<feature type="binding site" evidence="1">
    <location>
        <position position="117"/>
    </location>
    <ligand>
        <name>Zn(2+)</name>
        <dbReference type="ChEBI" id="CHEBI:29105"/>
        <note>catalytic</note>
    </ligand>
</feature>
<feature type="binding site" evidence="1">
    <location>
        <position position="123"/>
    </location>
    <ligand>
        <name>Zn(2+)</name>
        <dbReference type="ChEBI" id="CHEBI:29105"/>
        <note>catalytic</note>
    </ligand>
</feature>
<evidence type="ECO:0000255" key="1">
    <source>
        <dbReference type="HAMAP-Rule" id="MF_00009"/>
    </source>
</evidence>
<reference key="1">
    <citation type="journal article" date="2009" name="BMC Genomics">
        <title>Conservation in the face of diversity: multistrain analysis of an intracellular bacterium.</title>
        <authorList>
            <person name="Dark M.J."/>
            <person name="Herndon D.R."/>
            <person name="Kappmeyer L.S."/>
            <person name="Gonzales M.P."/>
            <person name="Nordeen E."/>
            <person name="Palmer G.H."/>
            <person name="Knowles D.P. Jr."/>
            <person name="Brayton K.A."/>
        </authorList>
    </citation>
    <scope>NUCLEOTIDE SEQUENCE [LARGE SCALE GENOMIC DNA]</scope>
    <source>
        <strain>Florida</strain>
    </source>
</reference>
<gene>
    <name evidence="1" type="primary">ybeY</name>
    <name type="ordered locus">AMF_953</name>
</gene>